<proteinExistence type="inferred from homology"/>
<protein>
    <recommendedName>
        <fullName evidence="1">Peptide chain release factor 1</fullName>
        <shortName evidence="1">RF-1</shortName>
    </recommendedName>
</protein>
<feature type="chain" id="PRO_1000004936" description="Peptide chain release factor 1">
    <location>
        <begin position="1"/>
        <end position="360"/>
    </location>
</feature>
<feature type="modified residue" description="N5-methylglutamine" evidence="1">
    <location>
        <position position="237"/>
    </location>
</feature>
<reference key="1">
    <citation type="journal article" date="2008" name="Proc. Natl. Acad. Sci. U.S.A.">
        <title>Nitrogen fixation island and rhizosphere competence traits in the genome of root-associated Pseudomonas stutzeri A1501.</title>
        <authorList>
            <person name="Yan Y."/>
            <person name="Yang J."/>
            <person name="Dou Y."/>
            <person name="Chen M."/>
            <person name="Ping S."/>
            <person name="Peng J."/>
            <person name="Lu W."/>
            <person name="Zhang W."/>
            <person name="Yao Z."/>
            <person name="Li H."/>
            <person name="Liu W."/>
            <person name="He S."/>
            <person name="Geng L."/>
            <person name="Zhang X."/>
            <person name="Yang F."/>
            <person name="Yu H."/>
            <person name="Zhan Y."/>
            <person name="Li D."/>
            <person name="Lin Z."/>
            <person name="Wang Y."/>
            <person name="Elmerich C."/>
            <person name="Lin M."/>
            <person name="Jin Q."/>
        </authorList>
    </citation>
    <scope>NUCLEOTIDE SEQUENCE [LARGE SCALE GENOMIC DNA]</scope>
    <source>
        <strain>A1501</strain>
    </source>
</reference>
<accession>A4VPB9</accession>
<dbReference type="EMBL" id="CP000304">
    <property type="protein sequence ID" value="ABP80820.1"/>
    <property type="molecule type" value="Genomic_DNA"/>
</dbReference>
<dbReference type="RefSeq" id="WP_011914265.1">
    <property type="nucleotide sequence ID" value="NC_009434.1"/>
</dbReference>
<dbReference type="SMR" id="A4VPB9"/>
<dbReference type="KEGG" id="psa:PST_3182"/>
<dbReference type="eggNOG" id="COG0216">
    <property type="taxonomic scope" value="Bacteria"/>
</dbReference>
<dbReference type="HOGENOM" id="CLU_036856_0_1_6"/>
<dbReference type="Proteomes" id="UP000000233">
    <property type="component" value="Chromosome"/>
</dbReference>
<dbReference type="GO" id="GO:0005737">
    <property type="term" value="C:cytoplasm"/>
    <property type="evidence" value="ECO:0007669"/>
    <property type="project" value="UniProtKB-SubCell"/>
</dbReference>
<dbReference type="GO" id="GO:0016149">
    <property type="term" value="F:translation release factor activity, codon specific"/>
    <property type="evidence" value="ECO:0007669"/>
    <property type="project" value="UniProtKB-UniRule"/>
</dbReference>
<dbReference type="FunFam" id="3.30.160.20:FF:000004">
    <property type="entry name" value="Peptide chain release factor 1"/>
    <property type="match status" value="1"/>
</dbReference>
<dbReference type="FunFam" id="3.30.70.1660:FF:000002">
    <property type="entry name" value="Peptide chain release factor 1"/>
    <property type="match status" value="1"/>
</dbReference>
<dbReference type="FunFam" id="3.30.70.1660:FF:000004">
    <property type="entry name" value="Peptide chain release factor 1"/>
    <property type="match status" value="1"/>
</dbReference>
<dbReference type="Gene3D" id="3.30.160.20">
    <property type="match status" value="1"/>
</dbReference>
<dbReference type="Gene3D" id="3.30.70.1660">
    <property type="match status" value="1"/>
</dbReference>
<dbReference type="Gene3D" id="6.10.140.1950">
    <property type="match status" value="1"/>
</dbReference>
<dbReference type="HAMAP" id="MF_00093">
    <property type="entry name" value="Rel_fac_1"/>
    <property type="match status" value="1"/>
</dbReference>
<dbReference type="InterPro" id="IPR005139">
    <property type="entry name" value="PCRF"/>
</dbReference>
<dbReference type="InterPro" id="IPR000352">
    <property type="entry name" value="Pep_chain_release_fac_I"/>
</dbReference>
<dbReference type="InterPro" id="IPR045853">
    <property type="entry name" value="Pep_chain_release_fac_I_sf"/>
</dbReference>
<dbReference type="InterPro" id="IPR050057">
    <property type="entry name" value="Prokaryotic/Mito_RF"/>
</dbReference>
<dbReference type="InterPro" id="IPR004373">
    <property type="entry name" value="RF-1"/>
</dbReference>
<dbReference type="NCBIfam" id="TIGR00019">
    <property type="entry name" value="prfA"/>
    <property type="match status" value="1"/>
</dbReference>
<dbReference type="NCBIfam" id="NF001859">
    <property type="entry name" value="PRK00591.1"/>
    <property type="match status" value="1"/>
</dbReference>
<dbReference type="PANTHER" id="PTHR43804">
    <property type="entry name" value="LD18447P"/>
    <property type="match status" value="1"/>
</dbReference>
<dbReference type="PANTHER" id="PTHR43804:SF7">
    <property type="entry name" value="LD18447P"/>
    <property type="match status" value="1"/>
</dbReference>
<dbReference type="Pfam" id="PF03462">
    <property type="entry name" value="PCRF"/>
    <property type="match status" value="1"/>
</dbReference>
<dbReference type="Pfam" id="PF00472">
    <property type="entry name" value="RF-1"/>
    <property type="match status" value="1"/>
</dbReference>
<dbReference type="SMART" id="SM00937">
    <property type="entry name" value="PCRF"/>
    <property type="match status" value="1"/>
</dbReference>
<dbReference type="SUPFAM" id="SSF75620">
    <property type="entry name" value="Release factor"/>
    <property type="match status" value="1"/>
</dbReference>
<dbReference type="PROSITE" id="PS00745">
    <property type="entry name" value="RF_PROK_I"/>
    <property type="match status" value="1"/>
</dbReference>
<comment type="function">
    <text evidence="1">Peptide chain release factor 1 directs the termination of translation in response to the peptide chain termination codons UAG and UAA.</text>
</comment>
<comment type="subcellular location">
    <subcellularLocation>
        <location evidence="1">Cytoplasm</location>
    </subcellularLocation>
</comment>
<comment type="PTM">
    <text evidence="1">Methylated by PrmC. Methylation increases the termination efficiency of RF1.</text>
</comment>
<comment type="similarity">
    <text evidence="1">Belongs to the prokaryotic/mitochondrial release factor family.</text>
</comment>
<gene>
    <name evidence="1" type="primary">prfA</name>
    <name type="ordered locus">PST_3182</name>
</gene>
<evidence type="ECO:0000255" key="1">
    <source>
        <dbReference type="HAMAP-Rule" id="MF_00093"/>
    </source>
</evidence>
<name>RF1_STUS1</name>
<sequence length="360" mass="40220">MKASLLNKLDILQDRFEELTALLGDAEVISDQSRFRAYSREYAEVEPVIVAYRQLCKVQQDLEGAQALLKDSDPDMREMAEEEVAEAKAQLETLEANLQRMLLPKDPNDGRNVFLEIRAGTGGDEAAIFAGDLFRMYSRYAEKQGWRVEILSESEGEHGGYKEVISRVEGDNVYAKLKFESGAHRVQRVPETESQGRIHTSACTVAVLPEPDEQAAVEINPAELRIDTYRSSGAGGQHVNKTDSAIRITHLPTGIVVECQEERSQHKNRAKAMAWLAAKLQDRQDAAAHKEISETRKLLVGSGDRSERIRTYNFPQGRVTDHRVNLTLYSLNEVIGGAVEQVIEPLLQEYQADQLAALGD</sequence>
<organism>
    <name type="scientific">Stutzerimonas stutzeri (strain A1501)</name>
    <name type="common">Pseudomonas stutzeri</name>
    <dbReference type="NCBI Taxonomy" id="379731"/>
    <lineage>
        <taxon>Bacteria</taxon>
        <taxon>Pseudomonadati</taxon>
        <taxon>Pseudomonadota</taxon>
        <taxon>Gammaproteobacteria</taxon>
        <taxon>Pseudomonadales</taxon>
        <taxon>Pseudomonadaceae</taxon>
        <taxon>Stutzerimonas</taxon>
    </lineage>
</organism>
<keyword id="KW-0963">Cytoplasm</keyword>
<keyword id="KW-0488">Methylation</keyword>
<keyword id="KW-0648">Protein biosynthesis</keyword>
<keyword id="KW-1185">Reference proteome</keyword>